<accession>Q7N3M3</accession>
<sequence>MKTCHIINRVGLSGVALLLTVSFTVSAVSENKRVDKFISCDNLTKSQIAAQVKRDFLQNRINHWSEDRKQLGTSKPVVWVKAENITGDKEILKIPLTVRGSKRDKDYRVVVDCQQNTISYSELK</sequence>
<name>YEBF_PHOLL</name>
<proteinExistence type="inferred from homology"/>
<organism>
    <name type="scientific">Photorhabdus laumondii subsp. laumondii (strain DSM 15139 / CIP 105565 / TT01)</name>
    <name type="common">Photorhabdus luminescens subsp. laumondii</name>
    <dbReference type="NCBI Taxonomy" id="243265"/>
    <lineage>
        <taxon>Bacteria</taxon>
        <taxon>Pseudomonadati</taxon>
        <taxon>Pseudomonadota</taxon>
        <taxon>Gammaproteobacteria</taxon>
        <taxon>Enterobacterales</taxon>
        <taxon>Morganellaceae</taxon>
        <taxon>Photorhabdus</taxon>
    </lineage>
</organism>
<dbReference type="EMBL" id="BX571868">
    <property type="protein sequence ID" value="CAE15066.1"/>
    <property type="molecule type" value="Genomic_DNA"/>
</dbReference>
<dbReference type="RefSeq" id="WP_011146914.1">
    <property type="nucleotide sequence ID" value="NC_005126.1"/>
</dbReference>
<dbReference type="SMR" id="Q7N3M3"/>
<dbReference type="STRING" id="243265.plu2692"/>
<dbReference type="GeneID" id="48848955"/>
<dbReference type="KEGG" id="plu:plu2692"/>
<dbReference type="eggNOG" id="ENOG5031MN2">
    <property type="taxonomic scope" value="Bacteria"/>
</dbReference>
<dbReference type="HOGENOM" id="CLU_161319_0_0_6"/>
<dbReference type="OrthoDB" id="6454940at2"/>
<dbReference type="Proteomes" id="UP000002514">
    <property type="component" value="Chromosome"/>
</dbReference>
<dbReference type="GO" id="GO:0005576">
    <property type="term" value="C:extracellular region"/>
    <property type="evidence" value="ECO:0007669"/>
    <property type="project" value="UniProtKB-SubCell"/>
</dbReference>
<dbReference type="Gene3D" id="3.10.450.300">
    <property type="entry name" value="YebF/Colicin-M immunity protein"/>
    <property type="match status" value="1"/>
</dbReference>
<dbReference type="HAMAP" id="MF_01435">
    <property type="entry name" value="YebF"/>
    <property type="match status" value="1"/>
</dbReference>
<dbReference type="InterPro" id="IPR020236">
    <property type="entry name" value="Uncharacterised_YebF"/>
</dbReference>
<dbReference type="InterPro" id="IPR038703">
    <property type="entry name" value="YebF/Cmi_sf"/>
</dbReference>
<dbReference type="InterPro" id="IPR025603">
    <property type="entry name" value="YebF/ColM_immunity"/>
</dbReference>
<dbReference type="NCBIfam" id="NF010224">
    <property type="entry name" value="PRK13680.1"/>
    <property type="match status" value="1"/>
</dbReference>
<dbReference type="NCBIfam" id="NF041240">
    <property type="entry name" value="YebF_not_Cmi"/>
    <property type="match status" value="1"/>
</dbReference>
<dbReference type="Pfam" id="PF13995">
    <property type="entry name" value="YebF"/>
    <property type="match status" value="1"/>
</dbReference>
<dbReference type="PROSITE" id="PS51979">
    <property type="entry name" value="YEBF_CMI"/>
    <property type="match status" value="1"/>
</dbReference>
<comment type="subcellular location">
    <subcellularLocation>
        <location evidence="1">Secreted</location>
    </subcellularLocation>
</comment>
<comment type="similarity">
    <text evidence="1">Belongs to the YebF family.</text>
</comment>
<protein>
    <recommendedName>
        <fullName evidence="1">Protein YebF</fullName>
    </recommendedName>
</protein>
<gene>
    <name evidence="1" type="primary">yebF</name>
    <name type="ordered locus">plu2692</name>
</gene>
<reference key="1">
    <citation type="journal article" date="2003" name="Nat. Biotechnol.">
        <title>The genome sequence of the entomopathogenic bacterium Photorhabdus luminescens.</title>
        <authorList>
            <person name="Duchaud E."/>
            <person name="Rusniok C."/>
            <person name="Frangeul L."/>
            <person name="Buchrieser C."/>
            <person name="Givaudan A."/>
            <person name="Taourit S."/>
            <person name="Bocs S."/>
            <person name="Boursaux-Eude C."/>
            <person name="Chandler M."/>
            <person name="Charles J.-F."/>
            <person name="Dassa E."/>
            <person name="Derose R."/>
            <person name="Derzelle S."/>
            <person name="Freyssinet G."/>
            <person name="Gaudriault S."/>
            <person name="Medigue C."/>
            <person name="Lanois A."/>
            <person name="Powell K."/>
            <person name="Siguier P."/>
            <person name="Vincent R."/>
            <person name="Wingate V."/>
            <person name="Zouine M."/>
            <person name="Glaser P."/>
            <person name="Boemare N."/>
            <person name="Danchin A."/>
            <person name="Kunst F."/>
        </authorList>
    </citation>
    <scope>NUCLEOTIDE SEQUENCE [LARGE SCALE GENOMIC DNA]</scope>
    <source>
        <strain>DSM 15139 / CIP 105565 / TT01</strain>
    </source>
</reference>
<keyword id="KW-1015">Disulfide bond</keyword>
<keyword id="KW-1185">Reference proteome</keyword>
<keyword id="KW-0964">Secreted</keyword>
<keyword id="KW-0732">Signal</keyword>
<evidence type="ECO:0000255" key="1">
    <source>
        <dbReference type="HAMAP-Rule" id="MF_01435"/>
    </source>
</evidence>
<evidence type="ECO:0000255" key="2">
    <source>
        <dbReference type="PROSITE-ProRule" id="PRU01323"/>
    </source>
</evidence>
<feature type="signal peptide" evidence="1">
    <location>
        <begin position="1"/>
        <end position="27"/>
    </location>
</feature>
<feature type="chain" id="PRO_0000045949" description="Protein YebF">
    <location>
        <begin position="28"/>
        <end position="124"/>
    </location>
</feature>
<feature type="domain" description="YebF/Cmi" evidence="2">
    <location>
        <begin position="36"/>
        <end position="123"/>
    </location>
</feature>
<feature type="disulfide bond" evidence="2">
    <location>
        <begin position="40"/>
        <end position="113"/>
    </location>
</feature>